<feature type="signal peptide" evidence="3">
    <location>
        <begin position="1"/>
        <end position="19"/>
    </location>
</feature>
<feature type="chain" id="PRO_0000012912" description="Adhesion G protein-coupled receptor L3">
    <location>
        <begin position="20"/>
        <end position="1580"/>
    </location>
</feature>
<feature type="topological domain" description="Extracellular" evidence="3">
    <location>
        <begin position="20"/>
        <end position="949"/>
    </location>
</feature>
<feature type="transmembrane region" description="Helical; Name=1" evidence="3">
    <location>
        <begin position="950"/>
        <end position="970"/>
    </location>
</feature>
<feature type="topological domain" description="Cytoplasmic" evidence="3">
    <location>
        <begin position="971"/>
        <end position="978"/>
    </location>
</feature>
<feature type="transmembrane region" description="Helical; Name=2" evidence="3">
    <location>
        <begin position="979"/>
        <end position="999"/>
    </location>
</feature>
<feature type="topological domain" description="Extracellular" evidence="3">
    <location>
        <begin position="1000"/>
        <end position="1007"/>
    </location>
</feature>
<feature type="transmembrane region" description="Helical; Name=3" evidence="3">
    <location>
        <begin position="1008"/>
        <end position="1028"/>
    </location>
</feature>
<feature type="topological domain" description="Cytoplasmic" evidence="3">
    <location>
        <begin position="1029"/>
        <end position="1050"/>
    </location>
</feature>
<feature type="transmembrane region" description="Helical; Name=4" evidence="3">
    <location>
        <begin position="1051"/>
        <end position="1071"/>
    </location>
</feature>
<feature type="topological domain" description="Extracellular" evidence="3">
    <location>
        <begin position="1072"/>
        <end position="1088"/>
    </location>
</feature>
<feature type="transmembrane region" description="Helical; Name=5" evidence="3">
    <location>
        <begin position="1089"/>
        <end position="1109"/>
    </location>
</feature>
<feature type="topological domain" description="Cytoplasmic" evidence="3">
    <location>
        <begin position="1110"/>
        <end position="1142"/>
    </location>
</feature>
<feature type="transmembrane region" description="Helical; Name=6" evidence="3">
    <location>
        <begin position="1143"/>
        <end position="1163"/>
    </location>
</feature>
<feature type="topological domain" description="Extracellular" evidence="3">
    <location>
        <begin position="1164"/>
        <end position="1169"/>
    </location>
</feature>
<feature type="transmembrane region" description="Helical; Name=7" evidence="3">
    <location>
        <begin position="1170"/>
        <end position="1190"/>
    </location>
</feature>
<feature type="topological domain" description="Cytoplasmic" evidence="3">
    <location>
        <begin position="1191"/>
        <end position="1580"/>
    </location>
</feature>
<feature type="domain" description="SUEL-type lectin" evidence="5">
    <location>
        <begin position="103"/>
        <end position="192"/>
    </location>
</feature>
<feature type="domain" description="Olfactomedin-like" evidence="6">
    <location>
        <begin position="202"/>
        <end position="461"/>
    </location>
</feature>
<feature type="domain" description="GAIN-B" evidence="4">
    <location>
        <begin position="756"/>
        <end position="935"/>
    </location>
</feature>
<feature type="region of interest" description="Disordered" evidence="7">
    <location>
        <begin position="23"/>
        <end position="81"/>
    </location>
</feature>
<feature type="region of interest" description="Interaction with FLRT3" evidence="2">
    <location>
        <begin position="317"/>
        <end position="347"/>
    </location>
</feature>
<feature type="region of interest" description="Disordered" evidence="7">
    <location>
        <begin position="494"/>
        <end position="540"/>
    </location>
</feature>
<feature type="region of interest" description="GPS" evidence="4">
    <location>
        <begin position="886"/>
        <end position="935"/>
    </location>
</feature>
<feature type="region of interest" description="Stachel" evidence="2">
    <location>
        <begin position="923"/>
        <end position="939"/>
    </location>
</feature>
<feature type="region of interest" description="Disordered" evidence="7">
    <location>
        <begin position="1213"/>
        <end position="1238"/>
    </location>
</feature>
<feature type="region of interest" description="Disordered" evidence="7">
    <location>
        <begin position="1555"/>
        <end position="1580"/>
    </location>
</feature>
<feature type="short sequence motif" description="PDZ-binding" evidence="1">
    <location>
        <begin position="1575"/>
        <end position="1580"/>
    </location>
</feature>
<feature type="compositionally biased region" description="Low complexity" evidence="7">
    <location>
        <begin position="496"/>
        <end position="521"/>
    </location>
</feature>
<feature type="compositionally biased region" description="Polar residues" evidence="7">
    <location>
        <begin position="522"/>
        <end position="539"/>
    </location>
</feature>
<feature type="binding site" evidence="1">
    <location>
        <position position="332"/>
    </location>
    <ligand>
        <name>Ca(2+)</name>
        <dbReference type="ChEBI" id="CHEBI:29108"/>
    </ligand>
</feature>
<feature type="binding site" evidence="1">
    <location>
        <position position="380"/>
    </location>
    <ligand>
        <name>Ca(2+)</name>
        <dbReference type="ChEBI" id="CHEBI:29108"/>
    </ligand>
</feature>
<feature type="binding site" evidence="1">
    <location>
        <position position="381"/>
    </location>
    <ligand>
        <name>Ca(2+)</name>
        <dbReference type="ChEBI" id="CHEBI:29108"/>
    </ligand>
</feature>
<feature type="binding site" evidence="1">
    <location>
        <position position="435"/>
    </location>
    <ligand>
        <name>Ca(2+)</name>
        <dbReference type="ChEBI" id="CHEBI:29108"/>
    </ligand>
</feature>
<feature type="site" description="Cleavage; by autolysis" evidence="4">
    <location>
        <begin position="922"/>
        <end position="923"/>
    </location>
</feature>
<feature type="modified residue" description="Phosphoserine" evidence="1">
    <location>
        <position position="1254"/>
    </location>
</feature>
<feature type="glycosylation site" description="N-linked (GlcNAc...) asparagine" evidence="3">
    <location>
        <position position="161"/>
    </location>
</feature>
<feature type="glycosylation site" description="N-linked (GlcNAc...) asparagine" evidence="3">
    <location>
        <position position="532"/>
    </location>
</feature>
<feature type="glycosylation site" description="N-linked (GlcNAc...) asparagine" evidence="3">
    <location>
        <position position="617"/>
    </location>
</feature>
<feature type="glycosylation site" description="N-linked (GlcNAc...) asparagine" evidence="3">
    <location>
        <position position="827"/>
    </location>
</feature>
<feature type="glycosylation site" description="N-linked (GlcNAc...) asparagine" evidence="3">
    <location>
        <position position="840"/>
    </location>
</feature>
<feature type="glycosylation site" description="N-linked (GlcNAc...) asparagine" evidence="3">
    <location>
        <position position="885"/>
    </location>
</feature>
<feature type="glycosylation site" description="N-linked (GlcNAc...) asparagine" evidence="3">
    <location>
        <position position="911"/>
    </location>
</feature>
<feature type="glycosylation site" description="N-linked (GlcNAc...) asparagine" evidence="3">
    <location>
        <position position="1000"/>
    </location>
</feature>
<feature type="glycosylation site" description="N-linked (GlcNAc...) asparagine" evidence="3">
    <location>
        <position position="1166"/>
    </location>
</feature>
<feature type="disulfide bond" evidence="1">
    <location>
        <begin position="104"/>
        <end position="134"/>
    </location>
</feature>
<feature type="disulfide bond" evidence="1">
    <location>
        <begin position="113"/>
        <end position="191"/>
    </location>
</feature>
<feature type="disulfide bond" evidence="1">
    <location>
        <begin position="146"/>
        <end position="178"/>
    </location>
</feature>
<feature type="disulfide bond" evidence="1">
    <location>
        <begin position="159"/>
        <end position="165"/>
    </location>
</feature>
<feature type="disulfide bond" evidence="6">
    <location>
        <begin position="203"/>
        <end position="385"/>
    </location>
</feature>
<feature type="disulfide bond" evidence="4">
    <location>
        <begin position="886"/>
        <end position="917"/>
    </location>
</feature>
<feature type="disulfide bond" evidence="4">
    <location>
        <begin position="905"/>
        <end position="919"/>
    </location>
</feature>
<feature type="splice variant" id="VSP_010113" description="In isoform 2, isoform 3, isoform 4, isoform 5, isoform 6 and isoform 8." evidence="9">
    <location>
        <begin position="19"/>
        <end position="86"/>
    </location>
</feature>
<feature type="splice variant" id="VSP_010114" description="In isoform 3, isoform 4, isoform 5, isoform 7 and isoform 9." evidence="9">
    <location>
        <begin position="1131"/>
        <end position="1139"/>
    </location>
</feature>
<feature type="splice variant" id="VSP_010115" description="In isoform 11." evidence="9">
    <location>
        <begin position="1132"/>
        <end position="1140"/>
    </location>
</feature>
<feature type="splice variant" id="VSP_010116" description="In isoform 5, isoform 6, isoform 11 and isoform 12." evidence="9">
    <original>GAMANHLISNALLRPHGTNNPYNTLLGEPAVCNNPSV</original>
    <variation>EPYRETSMGVKLNIAYQIGASEQCQGYKCHGYSTTEW</variation>
    <location>
        <begin position="1272"/>
        <end position="1308"/>
    </location>
</feature>
<feature type="splice variant" id="VSP_010117" description="In isoform 5, isoform 6, isoform 11 and isoform 12." evidence="9">
    <location>
        <begin position="1309"/>
        <end position="1580"/>
    </location>
</feature>
<feature type="splice variant" id="VSP_010119" description="In isoform 4, isoform 8, isoform 9 and isoform 10." evidence="9">
    <original>GLLNNARDTSVMDTLPLNGNHGNSYSIASGEYLSNC</original>
    <variation>PYRETSMGVKLNIAYQIGASEQCQGYKCHGYSTTEW</variation>
    <location>
        <begin position="1316"/>
        <end position="1351"/>
    </location>
</feature>
<feature type="splice variant" id="VSP_010120" description="In isoform 4, isoform 8, isoform 9 and isoform 10." evidence="9">
    <location>
        <begin position="1352"/>
        <end position="1580"/>
    </location>
</feature>
<gene>
    <name evidence="2" type="primary">ADGRL3</name>
    <name evidence="9" type="synonym">LPH3</name>
    <name evidence="2" type="synonym">LPHN3</name>
</gene>
<evidence type="ECO:0000250" key="1">
    <source>
        <dbReference type="UniProtKB" id="Q80TS3"/>
    </source>
</evidence>
<evidence type="ECO:0000250" key="2">
    <source>
        <dbReference type="UniProtKB" id="Q9HAR2"/>
    </source>
</evidence>
<evidence type="ECO:0000255" key="3"/>
<evidence type="ECO:0000255" key="4">
    <source>
        <dbReference type="PROSITE-ProRule" id="PRU00098"/>
    </source>
</evidence>
<evidence type="ECO:0000255" key="5">
    <source>
        <dbReference type="PROSITE-ProRule" id="PRU00260"/>
    </source>
</evidence>
<evidence type="ECO:0000255" key="6">
    <source>
        <dbReference type="PROSITE-ProRule" id="PRU00446"/>
    </source>
</evidence>
<evidence type="ECO:0000256" key="7">
    <source>
        <dbReference type="SAM" id="MobiDB-lite"/>
    </source>
</evidence>
<evidence type="ECO:0000269" key="8">
    <source>
    </source>
</evidence>
<evidence type="ECO:0000303" key="9">
    <source>
    </source>
</evidence>
<evidence type="ECO:0000305" key="10"/>
<protein>
    <recommendedName>
        <fullName evidence="2">Adhesion G protein-coupled receptor L3</fullName>
    </recommendedName>
    <alternativeName>
        <fullName evidence="9">Latrophilin-3</fullName>
    </alternativeName>
</protein>
<accession>O97827</accession>
<accession>O97818</accession>
<accession>O97819</accession>
<accession>O97820</accession>
<accession>O97821</accession>
<accession>O97822</accession>
<accession>O97823</accession>
<accession>O97824</accession>
<accession>O97825</accession>
<accession>O97826</accession>
<accession>O97828</accession>
<accession>O97829</accession>
<organism>
    <name type="scientific">Bos taurus</name>
    <name type="common">Bovine</name>
    <dbReference type="NCBI Taxonomy" id="9913"/>
    <lineage>
        <taxon>Eukaryota</taxon>
        <taxon>Metazoa</taxon>
        <taxon>Chordata</taxon>
        <taxon>Craniata</taxon>
        <taxon>Vertebrata</taxon>
        <taxon>Euteleostomi</taxon>
        <taxon>Mammalia</taxon>
        <taxon>Eutheria</taxon>
        <taxon>Laurasiatheria</taxon>
        <taxon>Artiodactyla</taxon>
        <taxon>Ruminantia</taxon>
        <taxon>Pecora</taxon>
        <taxon>Bovidae</taxon>
        <taxon>Bovinae</taxon>
        <taxon>Bos</taxon>
    </lineage>
</organism>
<keyword id="KW-0025">Alternative splicing</keyword>
<keyword id="KW-0965">Cell junction</keyword>
<keyword id="KW-1003">Cell membrane</keyword>
<keyword id="KW-0966">Cell projection</keyword>
<keyword id="KW-1015">Disulfide bond</keyword>
<keyword id="KW-0297">G-protein coupled receptor</keyword>
<keyword id="KW-0325">Glycoprotein</keyword>
<keyword id="KW-0430">Lectin</keyword>
<keyword id="KW-0472">Membrane</keyword>
<keyword id="KW-0479">Metal-binding</keyword>
<keyword id="KW-0597">Phosphoprotein</keyword>
<keyword id="KW-0628">Postsynaptic cell membrane</keyword>
<keyword id="KW-0675">Receptor</keyword>
<keyword id="KW-1185">Reference proteome</keyword>
<keyword id="KW-0732">Signal</keyword>
<keyword id="KW-0770">Synapse</keyword>
<keyword id="KW-0807">Transducer</keyword>
<keyword id="KW-0812">Transmembrane</keyword>
<keyword id="KW-1133">Transmembrane helix</keyword>
<name>AGRL3_BOVIN</name>
<sequence length="1580" mass="176051">MWPSQLLVFMMLLAPIIHGGKHSERHPALASPLRHAERGPGGALPPRHLLQQPAAERATAHRGPGPRGATRGVRGPGAHGAQISAQAFSRAPIPMAVVRRELSCESYPIELRCPGTDVIMIESANYGRTDDKICDSDPAQMENIRCYLPDAYKIMSQRCNNRTQCAVVAGPDVFPDPCPGTYKYLEVQYECVPYKVEQKVFLCPGLLKGVYQSEHLFESDHQSGAWCKDPLQASDKIYYMPWTPYRTDTLTEYSSKDDFIAGRPTTTYKLPHRVDGTGFVVYDGALFFNKERTRNIVKFDLRTRIKSGEAIIANANYHDTSPYRWGGKSDIDLAVDENGLWVIYATEQNNGKIVISQLNPYTLRIEGTWDTAYDKRSASNAFMICGILYVVKSVYEDDDNEATGNKIDYIYNTDQSKDSLVDVPFPNSYQYIAAVDYNPRDNLLYVWNNYHVVKYSLDFGPLDSRSGQAHHGQVSYISPPIHLDSDLERPPVREISTTGPLGTGSTTTSTTLRTTTWSPGRSTTPSVSGRRNRSTSTPSPAIEVLNDITTHVPSASPQIPALEESCEAVEAREIMWFKTRQGQMAKQPCPAGTIGVSTYLCLAPDGIWDPQGPDLSNCSSPWVNHITQKLKSGETAANIARELAEQTRNHLNAGDITYSVRAMDQLVGLLDVQLRNLTPGGKDSAARSLNKLQKRERSCRAYVQAMVETVNNLLQPQALNAWRDLTTSDQLRAATMLLDTVEESAFVLADNLLKTDIVRENTDNIQLEVARLSTEGNLEDLKFPENTGHGSTIQLSANTLKQNGRNGEIRVAFVLYNNLGPYLSTENASMKLGTEAMSTNHSVIVNSPVITAAINKEFSNKVYLADPVVFTVKHIKQSEENFNPNCSFWSYSKRTMTGYWSTQGCRLLTTNKTHTTCSCNHLTNFAVLMAHVEVKHSDAVHDLLLDVITWVGILLSLVCLLICIFTFCFFRGLQSDRNTIHKNLCISLFVAELLFLIGINRTDQPIACAVFAALLHFFFLAAFTWMFLEGVQLYIMLVEVFESEHSRRKYFYLVGYGMPALIVAVSAAVDYRSYGTDKVCWLRLDTYFIWSFIGPATLIIMLNVIFLGIALYKMFHHTAILKPESGCLDNINYEDNRPFIKSWVIGAIALLCLLGLTWAFGLMYINESTVIMAYLFTIFNSLQGMFIFIFHCVLQKKVRKEYGKCLRTHCCSGRSTESSIGSGKTSGSRTPGRYSTGSQSRIRRMWNDTVRKQSESSFITGDINSSASLNRGAMANHLISNALLRPHGTNNPYNTLLGEPAVCNNPSVSMYNAQEGLLNNARDTSVMDTLPLNGNHGNSYSIASGEYLSNCVQIIDRGYNHNETALEKKILKELTSNYIPSYLNNHERSSEQNRNLMNKLVNNLGSGSEDDAIVLDDATSFNHEESLGLELIHEESDAPLLPPRVYSTENHQLHHYTRRRIPQDHSESFFPLLTNEHTEDLQSPHRDSLYTSMPALAGVPTAESVTTSTQTEPPPAKCGDAEDVYYKSMPNLGSRNHVHQLHTYYQLGRGSSDGFIVPPNKDGTPPEGSSKGPAHLVTSL</sequence>
<proteinExistence type="evidence at transcript level"/>
<comment type="function">
    <text evidence="1">Orphan adhesion G-protein coupled receptor (aGPCR), which mediates synapse specificity. Ligand binding causes a conformation change that triggers signaling via guanine nucleotide-binding proteins (G proteins) and modulates the activity of downstream effectors. ADGRL3 is coupled with different classes of G alpha proteins, such as G(12)/G(13), G(s), G(i) or G(q), depending on the context. Coupling to G(12)/G(13) G proteins, which mediates the activation Rho small GTPases is the most efficient. Following G-protein coupled receptor activation, associates with cell adhesion molecules that are expressed at the surface of adjacent cells to direct synapse specificity. Specifically mediates the establishment of Schaffer-collateral synapses formed by CA3-region axons on CA1-region pyramidal neurons in the hippocampus. Localizes to postsynaptic spines in excitatory synapses in the S.oriens and S.radiatum and interacts with presynaptic cell adhesion molecules FLRT3 and TENM2, promoting synapse formation. Plays a role in the development of glutamatergic synapses in the cortex. Important in determining the connectivity rates between the principal neurons in the cortex.</text>
</comment>
<comment type="function">
    <molecule>Isoform 1</molecule>
    <text evidence="1">Orphan adhesion G-protein coupled receptor (aGPCR), which mediates synapse specificity. Ligand binding causes a conformation change that triggers signaling via guanine nucleotide-binding proteins (G proteins) and modulates the activity of downstream effectors, such as adenylate cyclase. Isoform 1 is specifically coupled to G(s) G proteins and mediates activation of adenylate cyclase activity. Following G-protein coupled receptor activation, undergoes liquid-liquid phase transition, associates with (1) cell adhesion molecules that are expressed at the surface of adjacent cells, as well as (2) PDZ-containing proteins, such as SHANK3 and DLG4, in the cytoplasm to direct synapse formation.</text>
</comment>
<comment type="activity regulation">
    <text evidence="1 2">Forms a heterodimer of 2 chains generated by proteolytic processing that remain associated through non-covalent interactions mediated by the GAIN-B domain (By similarity). In the inactivated receptor, the Stachel sequence (also named stalk) is embedded in the GAIN-B domain, where it adopts a beta-strand conformation. On activation, the Stachel moves into the 7 transmembrane region and adopts a twisted hook-shaped configuration that forms contacts within the receptor, leading to coupling of a G-alpha protein, which activates signaling. The cleaved GAIN-B and N-terminal domains can then dissociate from the rest of the receptor (By similarity).</text>
</comment>
<comment type="subunit">
    <text evidence="1 2 4">Heterodimer of 2 chains generated by proteolytic processing; the large extracellular N-terminal fragment and the membrane-bound C-terminal fragment predominantly remain associated and non-covalently linked (By similarity). Interacts (via olfactomedin-like domain) with FLRT1 (via extracellular domain). Interacts (via olfactomedin-like domain) with FLRT2 (via extracellular domain). Interacts (via olfactomedin-like domain) with FLRT3 (via extracellular domain); the interaction is direct. Interacts (via extracellular domain) with TENM1. Interacts (via extracellular domain) with TENM2. Interacts (via extracellular domain) with TENM3 (By similarity). Identified in a complex with FLRT3 and UNC5B; does not interact with UNC5B by itself. Identified in a complex with FLRT3 and UNC5D; does not interact with UNC5D by itself (By similarity).</text>
</comment>
<comment type="subunit">
    <molecule>Isoform 1</molecule>
    <text evidence="1">Interacts (via PDZ-binding motif) with SHANK3. Interacts (via PDZ-binding motif) with DLG4.</text>
</comment>
<comment type="subcellular location">
    <subcellularLocation>
        <location evidence="1">Cell membrane</location>
        <topology evidence="3">Multi-pass membrane protein</topology>
    </subcellularLocation>
    <subcellularLocation>
        <location evidence="1">Postsynaptic cell membrane</location>
        <topology evidence="3">Multi-pass membrane protein</topology>
    </subcellularLocation>
    <subcellularLocation>
        <location evidence="1">Cell projection</location>
        <location evidence="1">Axon</location>
    </subcellularLocation>
    <subcellularLocation>
        <location evidence="1">Cell junction</location>
    </subcellularLocation>
</comment>
<comment type="alternative products">
    <event type="alternative splicing"/>
    <isoform>
        <id>O97827-1</id>
        <name>1</name>
        <name>bbbf</name>
        <sequence type="displayed"/>
    </isoform>
    <isoform>
        <id>O97827-2</id>
        <name>2</name>
        <name>abbf</name>
        <sequence type="described" ref="VSP_010113"/>
    </isoform>
    <isoform>
        <id>O97827-3</id>
        <name>3</name>
        <name>abah</name>
        <sequence type="described" ref="VSP_010113 VSP_010114"/>
    </isoform>
    <isoform>
        <id>O97827-4</id>
        <name>4</name>
        <name>abah</name>
        <sequence type="described" ref="VSP_010113 VSP_010114 VSP_010119 VSP_010120"/>
    </isoform>
    <isoform>
        <id>O97827-5</id>
        <name>5</name>
        <name>abag</name>
        <sequence type="described" ref="VSP_010113 VSP_010114 VSP_010116 VSP_010117"/>
    </isoform>
    <isoform>
        <id>O97827-6</id>
        <name>6</name>
        <name>abbg</name>
        <sequence type="described" ref="VSP_010113 VSP_010116 VSP_010117"/>
    </isoform>
    <isoform>
        <id>O97827-7</id>
        <name>7</name>
        <name>bbaf</name>
        <sequence type="described" ref="VSP_010114"/>
    </isoform>
    <isoform>
        <id>O97827-8</id>
        <name>8</name>
        <name>abbh</name>
        <sequence type="described" ref="VSP_010113 VSP_010119 VSP_010120"/>
    </isoform>
    <isoform>
        <id>O97827-9</id>
        <name>9</name>
        <name>bbah</name>
        <sequence type="described" ref="VSP_010114 VSP_010119 VSP_010120"/>
    </isoform>
    <isoform>
        <id>O97827-10</id>
        <name>10</name>
        <name>bbbh</name>
        <sequence type="described" ref="VSP_010119 VSP_010120"/>
    </isoform>
    <isoform>
        <id>O97827-11</id>
        <name>11</name>
        <name>bbag</name>
        <sequence type="described" ref="VSP_010115 VSP_010116 VSP_010117"/>
    </isoform>
    <isoform>
        <id>O97827-12</id>
        <name>12</name>
        <name>bbbg</name>
        <sequence type="described" ref="VSP_010116 VSP_010117"/>
    </isoform>
</comment>
<comment type="tissue specificity">
    <text evidence="8">Brain-specific distribution but low levels are also detected in lung and spleen.</text>
</comment>
<comment type="domain">
    <text evidence="2">The Stachel sequence (also named stalk) in the C-terminal part of the extracellular domain (ECD) functions as a tethered agonist. In the inactivated receptor, the Stachel sequence (also named stalk) is embedded in the GAIN-B domain, where it adopts a beta-strand conformation. On activation, the Stachel moves into the 7 transmembrane region and adopts a twisted hook-shaped configuration that forms contacts within the receptor, leading to coupling of a G-alpha protein, which activates signaling.</text>
</comment>
<comment type="domain">
    <text evidence="1">The Olfactomedin-like domain is required for the synapse-promoting function and the interaction with FLRT3. The Olfactomedin-like and the SUEL-type lectin domains are required for the interaction with TENM1.</text>
</comment>
<comment type="PTM">
    <text evidence="1 4">Autoproteolytically processed at the GPS region of the GAIN-B domain; this cleavage modulates receptor activity.</text>
</comment>
<comment type="similarity">
    <text evidence="10">Belongs to the G-protein coupled receptor 2 family. LN-TM7 subfamily.</text>
</comment>
<dbReference type="EMBL" id="AF111085">
    <property type="protein sequence ID" value="AAD05321.1"/>
    <property type="molecule type" value="mRNA"/>
</dbReference>
<dbReference type="EMBL" id="AF111086">
    <property type="protein sequence ID" value="AAD05322.1"/>
    <property type="molecule type" value="mRNA"/>
</dbReference>
<dbReference type="EMBL" id="AF111087">
    <property type="protein sequence ID" value="AAD05323.1"/>
    <property type="molecule type" value="mRNA"/>
</dbReference>
<dbReference type="EMBL" id="AF111088">
    <property type="protein sequence ID" value="AAD05324.1"/>
    <property type="molecule type" value="mRNA"/>
</dbReference>
<dbReference type="EMBL" id="AF111089">
    <property type="protein sequence ID" value="AAD05325.1"/>
    <property type="molecule type" value="mRNA"/>
</dbReference>
<dbReference type="EMBL" id="AF111090">
    <property type="protein sequence ID" value="AAD05326.1"/>
    <property type="molecule type" value="mRNA"/>
</dbReference>
<dbReference type="EMBL" id="AF111091">
    <property type="protein sequence ID" value="AAD05327.1"/>
    <property type="molecule type" value="mRNA"/>
</dbReference>
<dbReference type="EMBL" id="AF111092">
    <property type="protein sequence ID" value="AAD05328.1"/>
    <property type="molecule type" value="mRNA"/>
</dbReference>
<dbReference type="EMBL" id="AF111095">
    <property type="protein sequence ID" value="AAD05331.1"/>
    <property type="molecule type" value="mRNA"/>
</dbReference>
<dbReference type="EMBL" id="AF111093">
    <property type="protein sequence ID" value="AAD05329.1"/>
    <property type="molecule type" value="mRNA"/>
</dbReference>
<dbReference type="EMBL" id="AF111094">
    <property type="protein sequence ID" value="AAD05330.1"/>
    <property type="molecule type" value="mRNA"/>
</dbReference>
<dbReference type="EMBL" id="AF111096">
    <property type="protein sequence ID" value="AAD05332.1"/>
    <property type="molecule type" value="mRNA"/>
</dbReference>
<dbReference type="PIR" id="T18389">
    <property type="entry name" value="T18389"/>
</dbReference>
<dbReference type="PIR" id="T18390">
    <property type="entry name" value="T18390"/>
</dbReference>
<dbReference type="PIR" id="T18391">
    <property type="entry name" value="T18391"/>
</dbReference>
<dbReference type="PIR" id="T18392">
    <property type="entry name" value="T18392"/>
</dbReference>
<dbReference type="PIR" id="T18393">
    <property type="entry name" value="T18393"/>
</dbReference>
<dbReference type="PIR" id="T18394">
    <property type="entry name" value="T18394"/>
</dbReference>
<dbReference type="PIR" id="T18395">
    <property type="entry name" value="T18395"/>
</dbReference>
<dbReference type="PIR" id="T18398">
    <property type="entry name" value="T18398"/>
</dbReference>
<dbReference type="PIR" id="T18405">
    <property type="entry name" value="T18405"/>
</dbReference>
<dbReference type="PIR" id="T18407">
    <property type="entry name" value="T18407"/>
</dbReference>
<dbReference type="PIR" id="T18408">
    <property type="entry name" value="T18408"/>
</dbReference>
<dbReference type="PIR" id="T18409">
    <property type="entry name" value="T18409"/>
</dbReference>
<dbReference type="RefSeq" id="NP_851376.1">
    <molecule id="O97827-1"/>
    <property type="nucleotide sequence ID" value="NM_181033.2"/>
</dbReference>
<dbReference type="RefSeq" id="XP_005208058.1">
    <property type="nucleotide sequence ID" value="XM_005208001.3"/>
</dbReference>
<dbReference type="RefSeq" id="XP_005208068.1">
    <property type="nucleotide sequence ID" value="XM_005208011.3"/>
</dbReference>
<dbReference type="RefSeq" id="XP_015327119.1">
    <property type="nucleotide sequence ID" value="XM_015471633.1"/>
</dbReference>
<dbReference type="RefSeq" id="XP_015327122.1">
    <property type="nucleotide sequence ID" value="XM_015471636.1"/>
</dbReference>
<dbReference type="RefSeq" id="XP_015327123.1">
    <property type="nucleotide sequence ID" value="XM_015471637.1"/>
</dbReference>
<dbReference type="RefSeq" id="XP_015327124.1">
    <property type="nucleotide sequence ID" value="XM_015471638.1"/>
</dbReference>
<dbReference type="RefSeq" id="XP_015327125.1">
    <property type="nucleotide sequence ID" value="XM_015471639.1"/>
</dbReference>
<dbReference type="RefSeq" id="XP_015327126.1">
    <property type="nucleotide sequence ID" value="XM_015471640.1"/>
</dbReference>
<dbReference type="RefSeq" id="XP_015327127.1">
    <property type="nucleotide sequence ID" value="XM_015471641.1"/>
</dbReference>
<dbReference type="RefSeq" id="XP_015327128.1">
    <property type="nucleotide sequence ID" value="XM_015471642.1"/>
</dbReference>
<dbReference type="RefSeq" id="XP_015327129.1">
    <property type="nucleotide sequence ID" value="XM_015471643.1"/>
</dbReference>
<dbReference type="RefSeq" id="XP_015327130.1">
    <property type="nucleotide sequence ID" value="XM_015471644.1"/>
</dbReference>
<dbReference type="SMR" id="O97827"/>
<dbReference type="FunCoup" id="O97827">
    <property type="interactions" value="2861"/>
</dbReference>
<dbReference type="STRING" id="9913.ENSBTAP00000049222"/>
<dbReference type="MEROPS" id="P02.011"/>
<dbReference type="GlyCosmos" id="O97827">
    <property type="glycosylation" value="9 sites, No reported glycans"/>
</dbReference>
<dbReference type="GlyGen" id="O97827">
    <property type="glycosylation" value="9 sites"/>
</dbReference>
<dbReference type="PaxDb" id="9913-ENSBTAP00000039471"/>
<dbReference type="Ensembl" id="ENSBTAT00000018508.7">
    <molecule id="O97827-12"/>
    <property type="protein sequence ID" value="ENSBTAP00000018508.7"/>
    <property type="gene ID" value="ENSBTAG00000013918.7"/>
</dbReference>
<dbReference type="Ensembl" id="ENSBTAT00000039682.5">
    <molecule id="O97827-1"/>
    <property type="protein sequence ID" value="ENSBTAP00000039471.5"/>
    <property type="gene ID" value="ENSBTAG00000013918.7"/>
</dbReference>
<dbReference type="Ensembl" id="ENSBTAT00000051991.4">
    <molecule id="O97827-10"/>
    <property type="protein sequence ID" value="ENSBTAP00000049222.4"/>
    <property type="gene ID" value="ENSBTAG00000013918.7"/>
</dbReference>
<dbReference type="GeneID" id="282651"/>
<dbReference type="KEGG" id="bta:282651"/>
<dbReference type="CTD" id="23284"/>
<dbReference type="VEuPathDB" id="HostDB:ENSBTAG00000013918"/>
<dbReference type="eggNOG" id="KOG3545">
    <property type="taxonomic scope" value="Eukaryota"/>
</dbReference>
<dbReference type="eggNOG" id="KOG4193">
    <property type="taxonomic scope" value="Eukaryota"/>
</dbReference>
<dbReference type="GeneTree" id="ENSGT00940000155527"/>
<dbReference type="HOGENOM" id="CLU_002753_0_2_1"/>
<dbReference type="InParanoid" id="O97827"/>
<dbReference type="OMA" id="WKVFLCP"/>
<dbReference type="OrthoDB" id="1100386at2759"/>
<dbReference type="Proteomes" id="UP000009136">
    <property type="component" value="Chromosome 6"/>
</dbReference>
<dbReference type="Bgee" id="ENSBTAG00000013918">
    <property type="expression patterns" value="Expressed in semen and 84 other cell types or tissues"/>
</dbReference>
<dbReference type="GO" id="GO:0030424">
    <property type="term" value="C:axon"/>
    <property type="evidence" value="ECO:0000250"/>
    <property type="project" value="UniProtKB"/>
</dbReference>
<dbReference type="GO" id="GO:0005911">
    <property type="term" value="C:cell-cell junction"/>
    <property type="evidence" value="ECO:0000250"/>
    <property type="project" value="UniProtKB"/>
</dbReference>
<dbReference type="GO" id="GO:0005615">
    <property type="term" value="C:extracellular space"/>
    <property type="evidence" value="ECO:0000318"/>
    <property type="project" value="GO_Central"/>
</dbReference>
<dbReference type="GO" id="GO:0005886">
    <property type="term" value="C:plasma membrane"/>
    <property type="evidence" value="ECO:0000250"/>
    <property type="project" value="UniProtKB"/>
</dbReference>
<dbReference type="GO" id="GO:0005509">
    <property type="term" value="F:calcium ion binding"/>
    <property type="evidence" value="ECO:0000250"/>
    <property type="project" value="UniProtKB"/>
</dbReference>
<dbReference type="GO" id="GO:0030246">
    <property type="term" value="F:carbohydrate binding"/>
    <property type="evidence" value="ECO:0007669"/>
    <property type="project" value="UniProtKB-KW"/>
</dbReference>
<dbReference type="GO" id="GO:0098631">
    <property type="term" value="F:cell adhesion mediator activity"/>
    <property type="evidence" value="ECO:0000250"/>
    <property type="project" value="UniProtKB"/>
</dbReference>
<dbReference type="GO" id="GO:0004930">
    <property type="term" value="F:G protein-coupled receptor activity"/>
    <property type="evidence" value="ECO:0000250"/>
    <property type="project" value="UniProtKB"/>
</dbReference>
<dbReference type="GO" id="GO:0007166">
    <property type="term" value="P:cell surface receptor signaling pathway"/>
    <property type="evidence" value="ECO:0007669"/>
    <property type="project" value="InterPro"/>
</dbReference>
<dbReference type="GO" id="GO:0098742">
    <property type="term" value="P:cell-cell adhesion via plasma-membrane adhesion molecules"/>
    <property type="evidence" value="ECO:0000250"/>
    <property type="project" value="UniProtKB"/>
</dbReference>
<dbReference type="GO" id="GO:1904861">
    <property type="term" value="P:excitatory synapse assembly"/>
    <property type="evidence" value="ECO:0000250"/>
    <property type="project" value="UniProtKB"/>
</dbReference>
<dbReference type="GO" id="GO:0001764">
    <property type="term" value="P:neuron migration"/>
    <property type="evidence" value="ECO:0000250"/>
    <property type="project" value="UniProtKB"/>
</dbReference>
<dbReference type="GO" id="GO:0160221">
    <property type="term" value="P:Rho-activating G protein-coupled receptor signaling pathway"/>
    <property type="evidence" value="ECO:0000250"/>
    <property type="project" value="UniProtKB"/>
</dbReference>
<dbReference type="GO" id="GO:0007165">
    <property type="term" value="P:signal transduction"/>
    <property type="evidence" value="ECO:0000318"/>
    <property type="project" value="GO_Central"/>
</dbReference>
<dbReference type="GO" id="GO:0007416">
    <property type="term" value="P:synapse assembly"/>
    <property type="evidence" value="ECO:0000250"/>
    <property type="project" value="UniProtKB"/>
</dbReference>
<dbReference type="CDD" id="cd16005">
    <property type="entry name" value="7tmB2_Latrophilin-3"/>
    <property type="match status" value="1"/>
</dbReference>
<dbReference type="CDD" id="cd22846">
    <property type="entry name" value="Gal_Rha_Lectin_LPHN3"/>
    <property type="match status" value="1"/>
</dbReference>
<dbReference type="FunFam" id="1.20.1070.10:FF:000011">
    <property type="entry name" value="Adhesion G protein-coupled receptor L2"/>
    <property type="match status" value="1"/>
</dbReference>
<dbReference type="FunFam" id="2.60.120.740:FF:000001">
    <property type="entry name" value="Adhesion G protein-coupled receptor L2"/>
    <property type="match status" value="1"/>
</dbReference>
<dbReference type="FunFam" id="2.60.220.50:FF:000001">
    <property type="entry name" value="Adhesion G protein-coupled receptor L2"/>
    <property type="match status" value="1"/>
</dbReference>
<dbReference type="FunFam" id="4.10.1240.10:FF:000004">
    <property type="entry name" value="Adhesion G protein-coupled receptor L3"/>
    <property type="match status" value="1"/>
</dbReference>
<dbReference type="FunFam" id="1.25.40.610:FF:000003">
    <property type="entry name" value="adhesion G protein-coupled receptor L3"/>
    <property type="match status" value="1"/>
</dbReference>
<dbReference type="Gene3D" id="1.25.40.610">
    <property type="match status" value="1"/>
</dbReference>
<dbReference type="Gene3D" id="2.60.120.740">
    <property type="match status" value="1"/>
</dbReference>
<dbReference type="Gene3D" id="2.60.220.50">
    <property type="match status" value="1"/>
</dbReference>
<dbReference type="Gene3D" id="4.10.1240.10">
    <property type="entry name" value="GPCR, family 2, extracellular hormone receptor domain"/>
    <property type="match status" value="1"/>
</dbReference>
<dbReference type="Gene3D" id="1.20.1070.10">
    <property type="entry name" value="Rhodopsin 7-helix transmembrane proteins"/>
    <property type="match status" value="1"/>
</dbReference>
<dbReference type="InterPro" id="IPR057244">
    <property type="entry name" value="GAIN_B"/>
</dbReference>
<dbReference type="InterPro" id="IPR032471">
    <property type="entry name" value="GAIN_dom_N"/>
</dbReference>
<dbReference type="InterPro" id="IPR046338">
    <property type="entry name" value="GAIN_dom_sf"/>
</dbReference>
<dbReference type="InterPro" id="IPR017981">
    <property type="entry name" value="GPCR_2-like_7TM"/>
</dbReference>
<dbReference type="InterPro" id="IPR036445">
    <property type="entry name" value="GPCR_2_extracell_dom_sf"/>
</dbReference>
<dbReference type="InterPro" id="IPR001879">
    <property type="entry name" value="GPCR_2_extracellular_dom"/>
</dbReference>
<dbReference type="InterPro" id="IPR003924">
    <property type="entry name" value="GPCR_2_latrophilin"/>
</dbReference>
<dbReference type="InterPro" id="IPR003334">
    <property type="entry name" value="GPCR_2_latrophilin_rcpt_C"/>
</dbReference>
<dbReference type="InterPro" id="IPR000832">
    <property type="entry name" value="GPCR_2_secretin-like"/>
</dbReference>
<dbReference type="InterPro" id="IPR017983">
    <property type="entry name" value="GPCR_2_secretin-like_CS"/>
</dbReference>
<dbReference type="InterPro" id="IPR000203">
    <property type="entry name" value="GPS"/>
</dbReference>
<dbReference type="InterPro" id="IPR000922">
    <property type="entry name" value="Lectin_gal-bd_dom"/>
</dbReference>
<dbReference type="InterPro" id="IPR043159">
    <property type="entry name" value="Lectin_gal-bd_sf"/>
</dbReference>
<dbReference type="InterPro" id="IPR003112">
    <property type="entry name" value="Olfac-like_dom"/>
</dbReference>
<dbReference type="PANTHER" id="PTHR12011:SF60">
    <property type="entry name" value="ADHESION G PROTEIN-COUPLED RECEPTOR L3"/>
    <property type="match status" value="1"/>
</dbReference>
<dbReference type="PANTHER" id="PTHR12011">
    <property type="entry name" value="ADHESION G-PROTEIN COUPLED RECEPTOR"/>
    <property type="match status" value="1"/>
</dbReference>
<dbReference type="Pfam" id="PF00002">
    <property type="entry name" value="7tm_2"/>
    <property type="match status" value="1"/>
</dbReference>
<dbReference type="Pfam" id="PF16489">
    <property type="entry name" value="GAIN"/>
    <property type="match status" value="1"/>
</dbReference>
<dbReference type="Pfam" id="PF01825">
    <property type="entry name" value="GPS"/>
    <property type="match status" value="1"/>
</dbReference>
<dbReference type="Pfam" id="PF02793">
    <property type="entry name" value="HRM"/>
    <property type="match status" value="1"/>
</dbReference>
<dbReference type="Pfam" id="PF02354">
    <property type="entry name" value="Latrophilin"/>
    <property type="match status" value="1"/>
</dbReference>
<dbReference type="Pfam" id="PF02191">
    <property type="entry name" value="OLF"/>
    <property type="match status" value="1"/>
</dbReference>
<dbReference type="Pfam" id="PF02140">
    <property type="entry name" value="SUEL_Lectin"/>
    <property type="match status" value="1"/>
</dbReference>
<dbReference type="PRINTS" id="PR00249">
    <property type="entry name" value="GPCRSECRETIN"/>
</dbReference>
<dbReference type="PRINTS" id="PR01444">
    <property type="entry name" value="LATROPHILIN"/>
</dbReference>
<dbReference type="SMART" id="SM00303">
    <property type="entry name" value="GPS"/>
    <property type="match status" value="1"/>
</dbReference>
<dbReference type="SMART" id="SM00008">
    <property type="entry name" value="HormR"/>
    <property type="match status" value="1"/>
</dbReference>
<dbReference type="SMART" id="SM00284">
    <property type="entry name" value="OLF"/>
    <property type="match status" value="1"/>
</dbReference>
<dbReference type="SUPFAM" id="SSF81321">
    <property type="entry name" value="Family A G protein-coupled receptor-like"/>
    <property type="match status" value="1"/>
</dbReference>
<dbReference type="PROSITE" id="PS00650">
    <property type="entry name" value="G_PROTEIN_RECEP_F2_2"/>
    <property type="match status" value="1"/>
</dbReference>
<dbReference type="PROSITE" id="PS50227">
    <property type="entry name" value="G_PROTEIN_RECEP_F2_3"/>
    <property type="match status" value="1"/>
</dbReference>
<dbReference type="PROSITE" id="PS50261">
    <property type="entry name" value="G_PROTEIN_RECEP_F2_4"/>
    <property type="match status" value="1"/>
</dbReference>
<dbReference type="PROSITE" id="PS50221">
    <property type="entry name" value="GAIN_B"/>
    <property type="match status" value="1"/>
</dbReference>
<dbReference type="PROSITE" id="PS51132">
    <property type="entry name" value="OLF"/>
    <property type="match status" value="1"/>
</dbReference>
<dbReference type="PROSITE" id="PS50228">
    <property type="entry name" value="SUEL_LECTIN"/>
    <property type="match status" value="1"/>
</dbReference>
<reference key="1">
    <citation type="journal article" date="1999" name="FEBS Lett.">
        <title>The latrophilin family: multiply spliced G protein-coupled receptors with differential tissue distribution.</title>
        <authorList>
            <person name="Matsushita H."/>
            <person name="Lelianova V.G."/>
            <person name="Ushkaryov Y.A."/>
        </authorList>
    </citation>
    <scope>NUCLEOTIDE SEQUENCE [MRNA] (ISOFORMS 1; 2; 3; 4; 5; 6; 7; 8; 9; 10; 11 AND 12)</scope>
    <scope>TISSUE SPECIFICITY</scope>
</reference>